<organism>
    <name type="scientific">Shigella flexneri</name>
    <dbReference type="NCBI Taxonomy" id="623"/>
    <lineage>
        <taxon>Bacteria</taxon>
        <taxon>Pseudomonadati</taxon>
        <taxon>Pseudomonadota</taxon>
        <taxon>Gammaproteobacteria</taxon>
        <taxon>Enterobacterales</taxon>
        <taxon>Enterobacteriaceae</taxon>
        <taxon>Shigella</taxon>
    </lineage>
</organism>
<sequence length="704" mass="77549">MARTTPIARYRNIGISAHIDAGKTTTTERILFYTGVNHKIGEVHDGAATMDWMEQEQERGITITSAATTAFWSGMAKQYEPHRINIIDTPGHVDFTIEVERSMRVLDGAVMVYCAVGGVQPQSETVWRQANKYKVPRIAFVNKMDRVGANFLKVVNQIKTRLGANPVPLQLAIGAEEHFTGVVDLVKMKAINWNDADQGVTFEYEDIPADMVELANEWHQNLIESAAEASEELMEKYLGGEELTEAEIKGALRQRVLNNEIILVTCGSAFKNKGVQAMLDAVIDYLPSPVDVPAINGILDDGKDTPAERHASDDEPFSALAFKIATDPFVGNLTFFRVYSGVVNSGDTVLNSVKAARERFGRIVQMHANKREEIKEVRAGDIAAAIGLKDVTTGDTLCDPDAPIILERMEFPEPVISIAVEPKTKADQEKMGLALGRLAKEDPSFRVWTDEESNQTIIAGMGELHLDIIVDRMKREFNVEANVGKPQVAYRETIRQKVTDVEGKHAKQSGGRGQYGHVVIDMYPLEPGSNPKGYEFINDIKGGVIPGEYIPAVDKGIQEQLKAGPLAGYPVVDMGIRLHFGSYHDVDSSELAFKLAASIAFKEGFKKAKPVLLEPIMKVEVETPEENTGDVIGDLSRRRGMLKGQESEVTGVKIHAEVPLSEMFGYATQLRSLTKGRASYTMEFLKYDEAPSNVAQAVIEARGK</sequence>
<reference key="1">
    <citation type="journal article" date="2002" name="Nucleic Acids Res.">
        <title>Genome sequence of Shigella flexneri 2a: insights into pathogenicity through comparison with genomes of Escherichia coli K12 and O157.</title>
        <authorList>
            <person name="Jin Q."/>
            <person name="Yuan Z."/>
            <person name="Xu J."/>
            <person name="Wang Y."/>
            <person name="Shen Y."/>
            <person name="Lu W."/>
            <person name="Wang J."/>
            <person name="Liu H."/>
            <person name="Yang J."/>
            <person name="Yang F."/>
            <person name="Zhang X."/>
            <person name="Zhang J."/>
            <person name="Yang G."/>
            <person name="Wu H."/>
            <person name="Qu D."/>
            <person name="Dong J."/>
            <person name="Sun L."/>
            <person name="Xue Y."/>
            <person name="Zhao A."/>
            <person name="Gao Y."/>
            <person name="Zhu J."/>
            <person name="Kan B."/>
            <person name="Ding K."/>
            <person name="Chen S."/>
            <person name="Cheng H."/>
            <person name="Yao Z."/>
            <person name="He B."/>
            <person name="Chen R."/>
            <person name="Ma D."/>
            <person name="Qiang B."/>
            <person name="Wen Y."/>
            <person name="Hou Y."/>
            <person name="Yu J."/>
        </authorList>
    </citation>
    <scope>NUCLEOTIDE SEQUENCE [LARGE SCALE GENOMIC DNA]</scope>
    <source>
        <strain>301 / Serotype 2a</strain>
    </source>
</reference>
<reference key="2">
    <citation type="submission" date="2011-08" db="EMBL/GenBank/DDBJ databases">
        <authorList>
            <person name="Jin Q."/>
            <person name="Shen Y."/>
            <person name="Wang J.H."/>
            <person name="Liu H."/>
            <person name="Yang J."/>
            <person name="Yang F."/>
            <person name="Zhang X.B."/>
            <person name="Zhang J.Y."/>
            <person name="Yang G.W."/>
            <person name="Wu H.T."/>
            <person name="Dong J."/>
            <person name="Sun L.L."/>
            <person name="Xue Y."/>
            <person name="Zhao A.L."/>
            <person name="Gao Y.S."/>
            <person name="Zhu J.P."/>
            <person name="Chen S.X."/>
            <person name="Yao Z.J."/>
            <person name="Wang Y."/>
            <person name="Lu W.C."/>
            <person name="Qiang B.Q."/>
            <person name="Wen Y.M."/>
            <person name="Hou Y.D."/>
        </authorList>
    </citation>
    <scope>SEQUENCE REVISION</scope>
</reference>
<reference key="3">
    <citation type="journal article" date="2003" name="Infect. Immun.">
        <title>Complete genome sequence and comparative genomics of Shigella flexneri serotype 2a strain 2457T.</title>
        <authorList>
            <person name="Wei J."/>
            <person name="Goldberg M.B."/>
            <person name="Burland V."/>
            <person name="Venkatesan M.M."/>
            <person name="Deng W."/>
            <person name="Fournier G."/>
            <person name="Mayhew G.F."/>
            <person name="Plunkett G. III"/>
            <person name="Rose D.J."/>
            <person name="Darling A."/>
            <person name="Mau B."/>
            <person name="Perna N.T."/>
            <person name="Payne S.M."/>
            <person name="Runyen-Janecky L.J."/>
            <person name="Zhou S."/>
            <person name="Schwartz D.C."/>
            <person name="Blattner F.R."/>
        </authorList>
    </citation>
    <scope>NUCLEOTIDE SEQUENCE [LARGE SCALE GENOMIC DNA]</scope>
    <source>
        <strain>ATCC 700930 / 2457T / Serotype 2a</strain>
    </source>
</reference>
<feature type="initiator methionine" description="Removed" evidence="1">
    <location>
        <position position="1"/>
    </location>
</feature>
<feature type="chain" id="PRO_0000091211" description="Elongation factor G">
    <location>
        <begin position="2"/>
        <end position="704"/>
    </location>
</feature>
<feature type="domain" description="tr-type G">
    <location>
        <begin position="8"/>
        <end position="290"/>
    </location>
</feature>
<feature type="binding site" evidence="2">
    <location>
        <begin position="17"/>
        <end position="24"/>
    </location>
    <ligand>
        <name>GTP</name>
        <dbReference type="ChEBI" id="CHEBI:37565"/>
    </ligand>
</feature>
<feature type="binding site" evidence="2">
    <location>
        <begin position="88"/>
        <end position="92"/>
    </location>
    <ligand>
        <name>GTP</name>
        <dbReference type="ChEBI" id="CHEBI:37565"/>
    </ligand>
</feature>
<feature type="binding site" evidence="2">
    <location>
        <begin position="142"/>
        <end position="145"/>
    </location>
    <ligand>
        <name>GTP</name>
        <dbReference type="ChEBI" id="CHEBI:37565"/>
    </ligand>
</feature>
<feature type="modified residue" description="N6-acetyllysine" evidence="1">
    <location>
        <position position="504"/>
    </location>
</feature>
<feature type="modified residue" description="N6-acetyllysine" evidence="1">
    <location>
        <position position="643"/>
    </location>
</feature>
<keyword id="KW-0007">Acetylation</keyword>
<keyword id="KW-0963">Cytoplasm</keyword>
<keyword id="KW-0251">Elongation factor</keyword>
<keyword id="KW-0342">GTP-binding</keyword>
<keyword id="KW-0547">Nucleotide-binding</keyword>
<keyword id="KW-0648">Protein biosynthesis</keyword>
<keyword id="KW-1185">Reference proteome</keyword>
<gene>
    <name evidence="2" type="primary">fusA</name>
    <name type="ordered locus">SF3358</name>
    <name type="ordered locus">S4404</name>
</gene>
<name>EFG_SHIFL</name>
<accession>Q83JC3</accession>
<accession>Q7UAR5</accession>
<proteinExistence type="inferred from homology"/>
<dbReference type="EMBL" id="AE005674">
    <property type="protein sequence ID" value="AAN44821.2"/>
    <property type="molecule type" value="Genomic_DNA"/>
</dbReference>
<dbReference type="EMBL" id="AE014073">
    <property type="protein sequence ID" value="AAP19356.1"/>
    <property type="status" value="ALT_INIT"/>
    <property type="molecule type" value="Genomic_DNA"/>
</dbReference>
<dbReference type="RefSeq" id="NP_709114.2">
    <property type="nucleotide sequence ID" value="NC_004337.2"/>
</dbReference>
<dbReference type="RefSeq" id="WP_000124706.1">
    <property type="nucleotide sequence ID" value="NZ_WPGW01000003.1"/>
</dbReference>
<dbReference type="SMR" id="Q83JC3"/>
<dbReference type="STRING" id="198214.SF3358"/>
<dbReference type="PaxDb" id="198214-SF3358"/>
<dbReference type="GeneID" id="1027012"/>
<dbReference type="KEGG" id="sfl:SF3358"/>
<dbReference type="KEGG" id="sfx:S4404"/>
<dbReference type="PATRIC" id="fig|198214.7.peg.3968"/>
<dbReference type="HOGENOM" id="CLU_002794_4_1_6"/>
<dbReference type="Proteomes" id="UP000001006">
    <property type="component" value="Chromosome"/>
</dbReference>
<dbReference type="Proteomes" id="UP000002673">
    <property type="component" value="Chromosome"/>
</dbReference>
<dbReference type="GO" id="GO:0005737">
    <property type="term" value="C:cytoplasm"/>
    <property type="evidence" value="ECO:0007669"/>
    <property type="project" value="UniProtKB-SubCell"/>
</dbReference>
<dbReference type="GO" id="GO:0005525">
    <property type="term" value="F:GTP binding"/>
    <property type="evidence" value="ECO:0007669"/>
    <property type="project" value="UniProtKB-UniRule"/>
</dbReference>
<dbReference type="GO" id="GO:0003924">
    <property type="term" value="F:GTPase activity"/>
    <property type="evidence" value="ECO:0007669"/>
    <property type="project" value="InterPro"/>
</dbReference>
<dbReference type="GO" id="GO:0097216">
    <property type="term" value="F:guanosine tetraphosphate binding"/>
    <property type="evidence" value="ECO:0007669"/>
    <property type="project" value="UniProtKB-ARBA"/>
</dbReference>
<dbReference type="GO" id="GO:0003746">
    <property type="term" value="F:translation elongation factor activity"/>
    <property type="evidence" value="ECO:0007669"/>
    <property type="project" value="UniProtKB-UniRule"/>
</dbReference>
<dbReference type="GO" id="GO:0032790">
    <property type="term" value="P:ribosome disassembly"/>
    <property type="evidence" value="ECO:0007669"/>
    <property type="project" value="TreeGrafter"/>
</dbReference>
<dbReference type="CDD" id="cd01886">
    <property type="entry name" value="EF-G"/>
    <property type="match status" value="1"/>
</dbReference>
<dbReference type="CDD" id="cd16262">
    <property type="entry name" value="EFG_III"/>
    <property type="match status" value="1"/>
</dbReference>
<dbReference type="CDD" id="cd01434">
    <property type="entry name" value="EFG_mtEFG1_IV"/>
    <property type="match status" value="1"/>
</dbReference>
<dbReference type="CDD" id="cd03713">
    <property type="entry name" value="EFG_mtEFG_C"/>
    <property type="match status" value="1"/>
</dbReference>
<dbReference type="CDD" id="cd04088">
    <property type="entry name" value="EFG_mtEFG_II"/>
    <property type="match status" value="1"/>
</dbReference>
<dbReference type="FunFam" id="2.40.30.10:FF:000006">
    <property type="entry name" value="Elongation factor G"/>
    <property type="match status" value="1"/>
</dbReference>
<dbReference type="FunFam" id="3.30.230.10:FF:000003">
    <property type="entry name" value="Elongation factor G"/>
    <property type="match status" value="1"/>
</dbReference>
<dbReference type="FunFam" id="3.30.70.240:FF:000001">
    <property type="entry name" value="Elongation factor G"/>
    <property type="match status" value="1"/>
</dbReference>
<dbReference type="FunFam" id="3.30.70.870:FF:000001">
    <property type="entry name" value="Elongation factor G"/>
    <property type="match status" value="1"/>
</dbReference>
<dbReference type="FunFam" id="3.40.50.300:FF:000029">
    <property type="entry name" value="Elongation factor G"/>
    <property type="match status" value="1"/>
</dbReference>
<dbReference type="Gene3D" id="3.30.230.10">
    <property type="match status" value="1"/>
</dbReference>
<dbReference type="Gene3D" id="3.30.70.240">
    <property type="match status" value="1"/>
</dbReference>
<dbReference type="Gene3D" id="3.30.70.870">
    <property type="entry name" value="Elongation Factor G (Translational Gtpase), domain 3"/>
    <property type="match status" value="1"/>
</dbReference>
<dbReference type="Gene3D" id="3.40.50.300">
    <property type="entry name" value="P-loop containing nucleotide triphosphate hydrolases"/>
    <property type="match status" value="1"/>
</dbReference>
<dbReference type="Gene3D" id="2.40.30.10">
    <property type="entry name" value="Translation factors"/>
    <property type="match status" value="1"/>
</dbReference>
<dbReference type="HAMAP" id="MF_00054_B">
    <property type="entry name" value="EF_G_EF_2_B"/>
    <property type="match status" value="1"/>
</dbReference>
<dbReference type="InterPro" id="IPR041095">
    <property type="entry name" value="EFG_II"/>
</dbReference>
<dbReference type="InterPro" id="IPR009022">
    <property type="entry name" value="EFG_III"/>
</dbReference>
<dbReference type="InterPro" id="IPR035647">
    <property type="entry name" value="EFG_III/V"/>
</dbReference>
<dbReference type="InterPro" id="IPR047872">
    <property type="entry name" value="EFG_IV"/>
</dbReference>
<dbReference type="InterPro" id="IPR035649">
    <property type="entry name" value="EFG_V"/>
</dbReference>
<dbReference type="InterPro" id="IPR000640">
    <property type="entry name" value="EFG_V-like"/>
</dbReference>
<dbReference type="InterPro" id="IPR004161">
    <property type="entry name" value="EFTu-like_2"/>
</dbReference>
<dbReference type="InterPro" id="IPR031157">
    <property type="entry name" value="G_TR_CS"/>
</dbReference>
<dbReference type="InterPro" id="IPR027417">
    <property type="entry name" value="P-loop_NTPase"/>
</dbReference>
<dbReference type="InterPro" id="IPR020568">
    <property type="entry name" value="Ribosomal_Su5_D2-typ_SF"/>
</dbReference>
<dbReference type="InterPro" id="IPR014721">
    <property type="entry name" value="Ribsml_uS5_D2-typ_fold_subgr"/>
</dbReference>
<dbReference type="InterPro" id="IPR005225">
    <property type="entry name" value="Small_GTP-bd"/>
</dbReference>
<dbReference type="InterPro" id="IPR000795">
    <property type="entry name" value="T_Tr_GTP-bd_dom"/>
</dbReference>
<dbReference type="InterPro" id="IPR009000">
    <property type="entry name" value="Transl_B-barrel_sf"/>
</dbReference>
<dbReference type="InterPro" id="IPR004540">
    <property type="entry name" value="Transl_elong_EFG/EF2"/>
</dbReference>
<dbReference type="InterPro" id="IPR005517">
    <property type="entry name" value="Transl_elong_EFG/EF2_IV"/>
</dbReference>
<dbReference type="NCBIfam" id="TIGR00484">
    <property type="entry name" value="EF-G"/>
    <property type="match status" value="1"/>
</dbReference>
<dbReference type="NCBIfam" id="NF009381">
    <property type="entry name" value="PRK12740.1-5"/>
    <property type="match status" value="1"/>
</dbReference>
<dbReference type="NCBIfam" id="TIGR00231">
    <property type="entry name" value="small_GTP"/>
    <property type="match status" value="1"/>
</dbReference>
<dbReference type="PANTHER" id="PTHR43261:SF1">
    <property type="entry name" value="RIBOSOME-RELEASING FACTOR 2, MITOCHONDRIAL"/>
    <property type="match status" value="1"/>
</dbReference>
<dbReference type="PANTHER" id="PTHR43261">
    <property type="entry name" value="TRANSLATION ELONGATION FACTOR G-RELATED"/>
    <property type="match status" value="1"/>
</dbReference>
<dbReference type="Pfam" id="PF00679">
    <property type="entry name" value="EFG_C"/>
    <property type="match status" value="1"/>
</dbReference>
<dbReference type="Pfam" id="PF14492">
    <property type="entry name" value="EFG_III"/>
    <property type="match status" value="1"/>
</dbReference>
<dbReference type="Pfam" id="PF03764">
    <property type="entry name" value="EFG_IV"/>
    <property type="match status" value="1"/>
</dbReference>
<dbReference type="Pfam" id="PF00009">
    <property type="entry name" value="GTP_EFTU"/>
    <property type="match status" value="1"/>
</dbReference>
<dbReference type="Pfam" id="PF03144">
    <property type="entry name" value="GTP_EFTU_D2"/>
    <property type="match status" value="1"/>
</dbReference>
<dbReference type="PRINTS" id="PR00315">
    <property type="entry name" value="ELONGATNFCT"/>
</dbReference>
<dbReference type="SMART" id="SM00838">
    <property type="entry name" value="EFG_C"/>
    <property type="match status" value="1"/>
</dbReference>
<dbReference type="SMART" id="SM00889">
    <property type="entry name" value="EFG_IV"/>
    <property type="match status" value="1"/>
</dbReference>
<dbReference type="SUPFAM" id="SSF54980">
    <property type="entry name" value="EF-G C-terminal domain-like"/>
    <property type="match status" value="2"/>
</dbReference>
<dbReference type="SUPFAM" id="SSF52540">
    <property type="entry name" value="P-loop containing nucleoside triphosphate hydrolases"/>
    <property type="match status" value="1"/>
</dbReference>
<dbReference type="SUPFAM" id="SSF54211">
    <property type="entry name" value="Ribosomal protein S5 domain 2-like"/>
    <property type="match status" value="1"/>
</dbReference>
<dbReference type="SUPFAM" id="SSF50447">
    <property type="entry name" value="Translation proteins"/>
    <property type="match status" value="1"/>
</dbReference>
<dbReference type="PROSITE" id="PS00301">
    <property type="entry name" value="G_TR_1"/>
    <property type="match status" value="1"/>
</dbReference>
<dbReference type="PROSITE" id="PS51722">
    <property type="entry name" value="G_TR_2"/>
    <property type="match status" value="1"/>
</dbReference>
<comment type="function">
    <text evidence="2">Catalyzes the GTP-dependent ribosomal translocation step during translation elongation. During this step, the ribosome changes from the pre-translocational (PRE) to the post-translocational (POST) state as the newly formed A-site-bound peptidyl-tRNA and P-site-bound deacylated tRNA move to the P and E sites, respectively. Catalyzes the coordinated movement of the two tRNA molecules, the mRNA and conformational changes in the ribosome.</text>
</comment>
<comment type="subcellular location">
    <subcellularLocation>
        <location evidence="2">Cytoplasm</location>
    </subcellularLocation>
</comment>
<comment type="similarity">
    <text evidence="2">Belongs to the TRAFAC class translation factor GTPase superfamily. Classic translation factor GTPase family. EF-G/EF-2 subfamily.</text>
</comment>
<comment type="sequence caution" evidence="3">
    <conflict type="erroneous initiation">
        <sequence resource="EMBL-CDS" id="AAP19356"/>
    </conflict>
    <text>Truncated N-terminus.</text>
</comment>
<protein>
    <recommendedName>
        <fullName evidence="2">Elongation factor G</fullName>
        <shortName evidence="2">EF-G</shortName>
    </recommendedName>
</protein>
<evidence type="ECO:0000250" key="1"/>
<evidence type="ECO:0000255" key="2">
    <source>
        <dbReference type="HAMAP-Rule" id="MF_00054"/>
    </source>
</evidence>
<evidence type="ECO:0000305" key="3"/>